<accession>Q29BL3</accession>
<name>PTER_DROPS</name>
<evidence type="ECO:0000250" key="1">
    <source>
        <dbReference type="UniProtKB" id="P45548"/>
    </source>
</evidence>
<evidence type="ECO:0000255" key="2">
    <source>
        <dbReference type="PROSITE-ProRule" id="PRU00679"/>
    </source>
</evidence>
<protein>
    <recommendedName>
        <fullName>Phosphotriesterase-related protein</fullName>
        <ecNumber>3.1.-.-</ecNumber>
    </recommendedName>
    <alternativeName>
        <fullName>Parathion hydrolase-related protein</fullName>
    </alternativeName>
</protein>
<dbReference type="EC" id="3.1.-.-"/>
<dbReference type="EMBL" id="CM000070">
    <property type="protein sequence ID" value="EAL26984.1"/>
    <property type="molecule type" value="Genomic_DNA"/>
</dbReference>
<dbReference type="SMR" id="Q29BL3"/>
<dbReference type="FunCoup" id="Q29BL3">
    <property type="interactions" value="2"/>
</dbReference>
<dbReference type="STRING" id="46245.Q29BL3"/>
<dbReference type="EnsemblMetazoa" id="FBtr0284332">
    <property type="protein sequence ID" value="FBpp0282770"/>
    <property type="gene ID" value="FBgn0074975"/>
</dbReference>
<dbReference type="KEGG" id="dpo:4800604"/>
<dbReference type="eggNOG" id="ENOG502QQQR">
    <property type="taxonomic scope" value="Eukaryota"/>
</dbReference>
<dbReference type="HOGENOM" id="CLU_054760_0_1_1"/>
<dbReference type="InParanoid" id="Q29BL3"/>
<dbReference type="OMA" id="MVKCGFI"/>
<dbReference type="PhylomeDB" id="Q29BL3"/>
<dbReference type="Proteomes" id="UP000001819">
    <property type="component" value="Chromosome 2"/>
</dbReference>
<dbReference type="Bgee" id="FBgn0074975">
    <property type="expression patterns" value="Expressed in female reproductive system and 3 other cell types or tissues"/>
</dbReference>
<dbReference type="GO" id="GO:0016788">
    <property type="term" value="F:hydrolase activity, acting on ester bonds"/>
    <property type="evidence" value="ECO:0007669"/>
    <property type="project" value="InterPro"/>
</dbReference>
<dbReference type="GO" id="GO:0008270">
    <property type="term" value="F:zinc ion binding"/>
    <property type="evidence" value="ECO:0007669"/>
    <property type="project" value="InterPro"/>
</dbReference>
<dbReference type="GO" id="GO:0009056">
    <property type="term" value="P:catabolic process"/>
    <property type="evidence" value="ECO:0007669"/>
    <property type="project" value="InterPro"/>
</dbReference>
<dbReference type="CDD" id="cd00530">
    <property type="entry name" value="PTE"/>
    <property type="match status" value="1"/>
</dbReference>
<dbReference type="Gene3D" id="3.20.20.140">
    <property type="entry name" value="Metal-dependent hydrolases"/>
    <property type="match status" value="1"/>
</dbReference>
<dbReference type="InterPro" id="IPR017947">
    <property type="entry name" value="AryldialkylPase_Zn-BS"/>
</dbReference>
<dbReference type="InterPro" id="IPR032466">
    <property type="entry name" value="Metal_Hydrolase"/>
</dbReference>
<dbReference type="InterPro" id="IPR001559">
    <property type="entry name" value="Phosphotriesterase"/>
</dbReference>
<dbReference type="PANTHER" id="PTHR10819">
    <property type="entry name" value="PHOSPHOTRIESTERASE-RELATED"/>
    <property type="match status" value="1"/>
</dbReference>
<dbReference type="PANTHER" id="PTHR10819:SF3">
    <property type="entry name" value="PHOSPHOTRIESTERASE-RELATED PROTEIN"/>
    <property type="match status" value="1"/>
</dbReference>
<dbReference type="Pfam" id="PF02126">
    <property type="entry name" value="PTE"/>
    <property type="match status" value="1"/>
</dbReference>
<dbReference type="SUPFAM" id="SSF51556">
    <property type="entry name" value="Metallo-dependent hydrolases"/>
    <property type="match status" value="1"/>
</dbReference>
<dbReference type="PROSITE" id="PS01322">
    <property type="entry name" value="PHOSPHOTRIESTERASE_1"/>
    <property type="match status" value="1"/>
</dbReference>
<dbReference type="PROSITE" id="PS51347">
    <property type="entry name" value="PHOSPHOTRIESTERASE_2"/>
    <property type="match status" value="1"/>
</dbReference>
<reference key="1">
    <citation type="journal article" date="2005" name="Genome Res.">
        <title>Comparative genome sequencing of Drosophila pseudoobscura: chromosomal, gene, and cis-element evolution.</title>
        <authorList>
            <person name="Richards S."/>
            <person name="Liu Y."/>
            <person name="Bettencourt B.R."/>
            <person name="Hradecky P."/>
            <person name="Letovsky S."/>
            <person name="Nielsen R."/>
            <person name="Thornton K."/>
            <person name="Hubisz M.J."/>
            <person name="Chen R."/>
            <person name="Meisel R.P."/>
            <person name="Couronne O."/>
            <person name="Hua S."/>
            <person name="Smith M.A."/>
            <person name="Zhang P."/>
            <person name="Liu J."/>
            <person name="Bussemaker H.J."/>
            <person name="van Batenburg M.F."/>
            <person name="Howells S.L."/>
            <person name="Scherer S.E."/>
            <person name="Sodergren E."/>
            <person name="Matthews B.B."/>
            <person name="Crosby M.A."/>
            <person name="Schroeder A.J."/>
            <person name="Ortiz-Barrientos D."/>
            <person name="Rives C.M."/>
            <person name="Metzker M.L."/>
            <person name="Muzny D.M."/>
            <person name="Scott G."/>
            <person name="Steffen D."/>
            <person name="Wheeler D.A."/>
            <person name="Worley K.C."/>
            <person name="Havlak P."/>
            <person name="Durbin K.J."/>
            <person name="Egan A."/>
            <person name="Gill R."/>
            <person name="Hume J."/>
            <person name="Morgan M.B."/>
            <person name="Miner G."/>
            <person name="Hamilton C."/>
            <person name="Huang Y."/>
            <person name="Waldron L."/>
            <person name="Verduzco D."/>
            <person name="Clerc-Blankenburg K.P."/>
            <person name="Dubchak I."/>
            <person name="Noor M.A.F."/>
            <person name="Anderson W."/>
            <person name="White K.P."/>
            <person name="Clark A.G."/>
            <person name="Schaeffer S.W."/>
            <person name="Gelbart W.M."/>
            <person name="Weinstock G.M."/>
            <person name="Gibbs R.A."/>
        </authorList>
    </citation>
    <scope>NUCLEOTIDE SEQUENCE [LARGE SCALE GENOMIC DNA]</scope>
    <source>
        <strain>MV2-25 / Tucson 14011-0121.94</strain>
    </source>
</reference>
<proteinExistence type="inferred from homology"/>
<feature type="chain" id="PRO_0000388678" description="Phosphotriesterase-related protein">
    <location>
        <begin position="1"/>
        <end position="350"/>
    </location>
</feature>
<feature type="binding site" evidence="1">
    <location>
        <position position="22"/>
    </location>
    <ligand>
        <name>a divalent metal cation</name>
        <dbReference type="ChEBI" id="CHEBI:60240"/>
        <label>1</label>
    </ligand>
</feature>
<feature type="binding site" evidence="1">
    <location>
        <position position="24"/>
    </location>
    <ligand>
        <name>a divalent metal cation</name>
        <dbReference type="ChEBI" id="CHEBI:60240"/>
        <label>1</label>
    </ligand>
</feature>
<feature type="binding site" evidence="1">
    <location>
        <position position="169"/>
    </location>
    <ligand>
        <name>a divalent metal cation</name>
        <dbReference type="ChEBI" id="CHEBI:60240"/>
        <label>1</label>
    </ligand>
</feature>
<feature type="binding site" evidence="1">
    <location>
        <position position="169"/>
    </location>
    <ligand>
        <name>a divalent metal cation</name>
        <dbReference type="ChEBI" id="CHEBI:60240"/>
        <label>2</label>
    </ligand>
</feature>
<feature type="binding site" evidence="1">
    <location>
        <position position="201"/>
    </location>
    <ligand>
        <name>a divalent metal cation</name>
        <dbReference type="ChEBI" id="CHEBI:60240"/>
        <label>2</label>
    </ligand>
</feature>
<feature type="binding site" evidence="1">
    <location>
        <position position="230"/>
    </location>
    <ligand>
        <name>a divalent metal cation</name>
        <dbReference type="ChEBI" id="CHEBI:60240"/>
        <label>2</label>
    </ligand>
</feature>
<feature type="binding site" evidence="1">
    <location>
        <position position="298"/>
    </location>
    <ligand>
        <name>a divalent metal cation</name>
        <dbReference type="ChEBI" id="CHEBI:60240"/>
        <label>1</label>
    </ligand>
</feature>
<comment type="cofactor">
    <cofactor evidence="1">
        <name>a divalent metal cation</name>
        <dbReference type="ChEBI" id="CHEBI:60240"/>
    </cofactor>
    <text evidence="1">Binds 2 divalent metal cations per subunit.</text>
</comment>
<comment type="similarity">
    <text evidence="2">Belongs to the metallo-dependent hydrolases superfamily. Phosphotriesterase family.</text>
</comment>
<gene>
    <name type="ORF">GA14949</name>
</gene>
<sequence>MTAVETVLGSITPNLLGRTLTHEHVALDFEHFYRPPPADFESELKAKISMSTLGYVRLYPYSSKENVRFYDEEALEAAKKDVLLYKKHGGGSIVENSSYGLKRNLEFIVELAKSTGVHFIAGTGHYIHAVQDASHASLTVEQMSDLYTKDILTGIEIKGKMVKCGFIGEVASVYPIHEFEKNSIKATGEIQEVLGCGVSFHPHRDAQAPFDIMRLYLEAGGRAQKCVMSHLDRTLFKIEELVELSELGCYLQYDLFGTECSYYQLNTNVDMISDGQRIENLMKLIEEGLLDRLLMSHDIHTKHRLTSYGGHGYHHIHTNILPRMFARGVTLEQVEQMTVTNPANWLSFDP</sequence>
<organism>
    <name type="scientific">Drosophila pseudoobscura pseudoobscura</name>
    <name type="common">Fruit fly</name>
    <dbReference type="NCBI Taxonomy" id="46245"/>
    <lineage>
        <taxon>Eukaryota</taxon>
        <taxon>Metazoa</taxon>
        <taxon>Ecdysozoa</taxon>
        <taxon>Arthropoda</taxon>
        <taxon>Hexapoda</taxon>
        <taxon>Insecta</taxon>
        <taxon>Pterygota</taxon>
        <taxon>Neoptera</taxon>
        <taxon>Endopterygota</taxon>
        <taxon>Diptera</taxon>
        <taxon>Brachycera</taxon>
        <taxon>Muscomorpha</taxon>
        <taxon>Ephydroidea</taxon>
        <taxon>Drosophilidae</taxon>
        <taxon>Drosophila</taxon>
        <taxon>Sophophora</taxon>
    </lineage>
</organism>
<keyword id="KW-0378">Hydrolase</keyword>
<keyword id="KW-0479">Metal-binding</keyword>
<keyword id="KW-1185">Reference proteome</keyword>